<protein>
    <recommendedName>
        <fullName evidence="1">Geranylgeranylglyceryl phosphate synthase</fullName>
        <shortName evidence="1">GGGP synthase</shortName>
        <shortName evidence="1">GGGPS</shortName>
        <ecNumber evidence="1 2 3">2.5.1.41</ecNumber>
    </recommendedName>
    <alternativeName>
        <fullName evidence="1">(S)-3-O-geranylgeranylglyceryl phosphate synthase</fullName>
    </alternativeName>
    <alternativeName>
        <fullName evidence="1">Phosphoglycerol geranylgeranyltransferase</fullName>
    </alternativeName>
</protein>
<dbReference type="EC" id="2.5.1.41" evidence="1 2 3"/>
<dbReference type="EMBL" id="AL445066">
    <property type="protein sequence ID" value="CAC12124.1"/>
    <property type="molecule type" value="Genomic_DNA"/>
</dbReference>
<dbReference type="RefSeq" id="WP_010901406.1">
    <property type="nucleotide sequence ID" value="NC_002578.1"/>
</dbReference>
<dbReference type="PDB" id="6JO3">
    <property type="method" value="X-ray"/>
    <property type="resolution" value="2.35 A"/>
    <property type="chains" value="A/B=1-253"/>
</dbReference>
<dbReference type="PDBsum" id="6JO3"/>
<dbReference type="SMR" id="Q9HJH3"/>
<dbReference type="STRING" id="273075.gene:9572214"/>
<dbReference type="PaxDb" id="273075-Ta0995"/>
<dbReference type="EnsemblBacteria" id="CAC12124">
    <property type="protein sequence ID" value="CAC12124"/>
    <property type="gene ID" value="CAC12124"/>
</dbReference>
<dbReference type="KEGG" id="tac:Ta0995"/>
<dbReference type="eggNOG" id="arCOG01085">
    <property type="taxonomic scope" value="Archaea"/>
</dbReference>
<dbReference type="HOGENOM" id="CLU_068610_0_0_2"/>
<dbReference type="InParanoid" id="Q9HJH3"/>
<dbReference type="OrthoDB" id="7409at2157"/>
<dbReference type="BRENDA" id="2.5.1.41">
    <property type="organism ID" value="6324"/>
</dbReference>
<dbReference type="SABIO-RK" id="Q9HJH3"/>
<dbReference type="UniPathway" id="UPA00940"/>
<dbReference type="Proteomes" id="UP000001024">
    <property type="component" value="Chromosome"/>
</dbReference>
<dbReference type="GO" id="GO:0005737">
    <property type="term" value="C:cytoplasm"/>
    <property type="evidence" value="ECO:0007669"/>
    <property type="project" value="UniProtKB-SubCell"/>
</dbReference>
<dbReference type="GO" id="GO:0000287">
    <property type="term" value="F:magnesium ion binding"/>
    <property type="evidence" value="ECO:0007669"/>
    <property type="project" value="UniProtKB-UniRule"/>
</dbReference>
<dbReference type="GO" id="GO:0047294">
    <property type="term" value="F:phosphoglycerol geranylgeranyltransferase activity"/>
    <property type="evidence" value="ECO:0007669"/>
    <property type="project" value="UniProtKB-UniRule"/>
</dbReference>
<dbReference type="GO" id="GO:0046474">
    <property type="term" value="P:glycerophospholipid biosynthetic process"/>
    <property type="evidence" value="ECO:0007669"/>
    <property type="project" value="UniProtKB-UniRule"/>
</dbReference>
<dbReference type="CDD" id="cd02812">
    <property type="entry name" value="PcrB_like"/>
    <property type="match status" value="1"/>
</dbReference>
<dbReference type="Gene3D" id="3.20.20.390">
    <property type="entry name" value="FMN-linked oxidoreductases"/>
    <property type="match status" value="1"/>
</dbReference>
<dbReference type="HAMAP" id="MF_00112">
    <property type="entry name" value="GGGP_HepGP_synthase"/>
    <property type="match status" value="1"/>
</dbReference>
<dbReference type="InterPro" id="IPR039074">
    <property type="entry name" value="GGGP/HepGP_synthase_I"/>
</dbReference>
<dbReference type="InterPro" id="IPR038597">
    <property type="entry name" value="GGGP/HepGP_synthase_sf"/>
</dbReference>
<dbReference type="InterPro" id="IPR008205">
    <property type="entry name" value="GGGP_HepGP_synthase"/>
</dbReference>
<dbReference type="InterPro" id="IPR010946">
    <property type="entry name" value="GGGP_synth"/>
</dbReference>
<dbReference type="NCBIfam" id="TIGR01769">
    <property type="entry name" value="GGGP"/>
    <property type="match status" value="1"/>
</dbReference>
<dbReference type="NCBIfam" id="TIGR01768">
    <property type="entry name" value="GGGP-family"/>
    <property type="match status" value="1"/>
</dbReference>
<dbReference type="NCBIfam" id="NF003198">
    <property type="entry name" value="PRK04169.1-2"/>
    <property type="match status" value="1"/>
</dbReference>
<dbReference type="PANTHER" id="PTHR40029">
    <property type="match status" value="1"/>
</dbReference>
<dbReference type="PANTHER" id="PTHR40029:SF2">
    <property type="entry name" value="HEPTAPRENYLGLYCERYL PHOSPHATE SYNTHASE"/>
    <property type="match status" value="1"/>
</dbReference>
<dbReference type="Pfam" id="PF01884">
    <property type="entry name" value="PcrB"/>
    <property type="match status" value="1"/>
</dbReference>
<dbReference type="SUPFAM" id="SSF51395">
    <property type="entry name" value="FMN-linked oxidoreductases"/>
    <property type="match status" value="1"/>
</dbReference>
<reference key="1">
    <citation type="journal article" date="2000" name="Nature">
        <title>The genome sequence of the thermoacidophilic scavenger Thermoplasma acidophilum.</title>
        <authorList>
            <person name="Ruepp A."/>
            <person name="Graml W."/>
            <person name="Santos-Martinez M.-L."/>
            <person name="Koretke K.K."/>
            <person name="Volker C."/>
            <person name="Mewes H.-W."/>
            <person name="Frishman D."/>
            <person name="Stocker S."/>
            <person name="Lupas A.N."/>
            <person name="Baumeister W."/>
        </authorList>
    </citation>
    <scope>NUCLEOTIDE SEQUENCE [LARGE SCALE GENOMIC DNA]</scope>
    <source>
        <strain>ATCC 25905 / DSM 1728 / JCM 9062 / NBRC 15155 / AMRC-C165</strain>
    </source>
</reference>
<reference key="2">
    <citation type="journal article" date="2003" name="J. Biochem.">
        <title>Purification and characterization of geranylgeranylglyceryl phosphate synthase from a thermoacidophilic archaeon, Thermoplasma acidophilum.</title>
        <authorList>
            <person name="Nemoto N."/>
            <person name="Oshima T."/>
            <person name="Yamagishi A."/>
        </authorList>
    </citation>
    <scope>IDENTIFICATION BY MASS SPECTROMETRY</scope>
    <scope>FUNCTION</scope>
    <scope>COFACTOR</scope>
    <scope>SUBSTRATE SPECIFICITY</scope>
    <scope>ACTIVITY REGULATION</scope>
    <scope>SUBUNIT</scope>
    <scope>BIOPHYSICOCHEMICAL PROPERTIES</scope>
    <source>
        <strain>ATCC 25905 / DSM 1728 / JCM 9062 / NBRC 15155 / AMRC-C165</strain>
    </source>
</reference>
<reference key="3">
    <citation type="journal article" date="2014" name="Mol. Microbiol.">
        <title>A comprehensive analysis of the geranylgeranylglyceryl phosphate synthase enzyme family identifies novel members and reveals mechanisms of substrate specificity and quaternary structure organization.</title>
        <authorList>
            <person name="Peterhoff D."/>
            <person name="Beer B."/>
            <person name="Rajendran C."/>
            <person name="Kumpula E.P."/>
            <person name="Kapetaniou E."/>
            <person name="Guldan H."/>
            <person name="Wierenga R.K."/>
            <person name="Sterner R."/>
            <person name="Babinger P."/>
        </authorList>
    </citation>
    <scope>FUNCTION</scope>
    <scope>CATALYTIC ACTIVITY</scope>
    <scope>SUBUNIT</scope>
</reference>
<keyword id="KW-0002">3D-structure</keyword>
<keyword id="KW-0963">Cytoplasm</keyword>
<keyword id="KW-0444">Lipid biosynthesis</keyword>
<keyword id="KW-0443">Lipid metabolism</keyword>
<keyword id="KW-0460">Magnesium</keyword>
<keyword id="KW-0479">Metal-binding</keyword>
<keyword id="KW-0594">Phospholipid biosynthesis</keyword>
<keyword id="KW-1208">Phospholipid metabolism</keyword>
<keyword id="KW-1185">Reference proteome</keyword>
<keyword id="KW-0808">Transferase</keyword>
<sequence length="253" mass="27252">MMTVLEDMLRKTRNGKVHMTLIDPGAKPPQECARIAEEAEMAGTDFIMVGGSTDIDSRAMDEAISAIKAKTDLKVIIFPGSSLMISPKADAIFFMSLLNSGSLEYVVGHQVKAAIPLSAMKIEKIPMAYLVFDPGMTVGRVGKAHLIPRDDEKTALSYALAAQYFGFRLVYFEAGSGSPYHVGENVVRRVKQELDIPVIVGGGIRTPEAAKALAQAGADMIVTGTIAERSVNVYEALHPIVESIKEVGISKIQ</sequence>
<organism>
    <name type="scientific">Thermoplasma acidophilum (strain ATCC 25905 / DSM 1728 / JCM 9062 / NBRC 15155 / AMRC-C165)</name>
    <dbReference type="NCBI Taxonomy" id="273075"/>
    <lineage>
        <taxon>Archaea</taxon>
        <taxon>Methanobacteriati</taxon>
        <taxon>Thermoplasmatota</taxon>
        <taxon>Thermoplasmata</taxon>
        <taxon>Thermoplasmatales</taxon>
        <taxon>Thermoplasmataceae</taxon>
        <taxon>Thermoplasma</taxon>
    </lineage>
</organism>
<gene>
    <name type="ordered locus">Ta0995</name>
</gene>
<proteinExistence type="evidence at protein level"/>
<name>GGGPS_THEAC</name>
<accession>Q9HJH3</accession>
<comment type="function">
    <text evidence="2 3">Prenyltransferase that catalyzes the transfer of the geranylgeranyl moiety of geranylgeranyl diphosphate (GGPP) to the C3 hydroxyl of sn-glycerol-1-phosphate (G1P). This reaction is the first ether-bond-formation step in the biosynthesis of archaeal membrane lipids. Cannot use sn-glycerol-3-phosphate (G3P) as substrate.</text>
</comment>
<comment type="catalytic activity">
    <reaction evidence="1 2 3">
        <text>sn-glycerol 1-phosphate + (2E,6E,10E)-geranylgeranyl diphosphate = sn-3-O-(geranylgeranyl)glycerol 1-phosphate + diphosphate</text>
        <dbReference type="Rhea" id="RHEA:23404"/>
        <dbReference type="ChEBI" id="CHEBI:33019"/>
        <dbReference type="ChEBI" id="CHEBI:57677"/>
        <dbReference type="ChEBI" id="CHEBI:57685"/>
        <dbReference type="ChEBI" id="CHEBI:58756"/>
        <dbReference type="EC" id="2.5.1.41"/>
    </reaction>
</comment>
<comment type="cofactor">
    <cofactor evidence="1 2">
        <name>Mg(2+)</name>
        <dbReference type="ChEBI" id="CHEBI:18420"/>
    </cofactor>
    <text evidence="2">Cannot use Mn(2+) or Zn(2+).</text>
</comment>
<comment type="activity regulation">
    <text evidence="2">Inhibited by high concentrations of magnesium (&gt;10 mM) and by EDTA in vitro.</text>
</comment>
<comment type="biophysicochemical properties">
    <kinetics>
        <KM evidence="2">21.2 uM for G-1,3-P (at 55 degrees Celsius and pH 7)</KM>
        <KM evidence="2">75 nM for GGPP (at 55 degrees Celsius and pH 7)</KM>
        <Vmax evidence="2">13.5 umol/min/mg enzyme (at 55 degrees Celsius and pH 7)</Vmax>
    </kinetics>
    <phDependence>
        <text evidence="2">Optimum pH is about 7.0. Active from pH 6 to 9.</text>
    </phDependence>
    <temperatureDependence>
        <text evidence="2">Optimum temperature is 55 degrees Celsius.</text>
    </temperatureDependence>
</comment>
<comment type="pathway">
    <text evidence="1">Membrane lipid metabolism; glycerophospholipid metabolism.</text>
</comment>
<comment type="subunit">
    <text evidence="2 3">Homodimer.</text>
</comment>
<comment type="subcellular location">
    <subcellularLocation>
        <location evidence="1">Cytoplasm</location>
    </subcellularLocation>
</comment>
<comment type="similarity">
    <text evidence="1">Belongs to the GGGP/HepGP synthase family. Group II subfamily.</text>
</comment>
<evidence type="ECO:0000255" key="1">
    <source>
        <dbReference type="HAMAP-Rule" id="MF_00112"/>
    </source>
</evidence>
<evidence type="ECO:0000269" key="2">
    <source>
    </source>
</evidence>
<evidence type="ECO:0000269" key="3">
    <source>
    </source>
</evidence>
<evidence type="ECO:0007829" key="4">
    <source>
        <dbReference type="PDB" id="6JO3"/>
    </source>
</evidence>
<feature type="chain" id="PRO_0000138746" description="Geranylgeranylglyceryl phosphate synthase">
    <location>
        <begin position="1"/>
        <end position="253"/>
    </location>
</feature>
<feature type="binding site" evidence="1">
    <location>
        <position position="23"/>
    </location>
    <ligand>
        <name>Mg(2+)</name>
        <dbReference type="ChEBI" id="CHEBI:18420"/>
    </ligand>
</feature>
<feature type="binding site" evidence="1">
    <location>
        <position position="52"/>
    </location>
    <ligand>
        <name>Mg(2+)</name>
        <dbReference type="ChEBI" id="CHEBI:18420"/>
    </ligand>
</feature>
<feature type="binding site" evidence="1">
    <location>
        <begin position="171"/>
        <end position="177"/>
    </location>
    <ligand>
        <name>sn-glycerol 1-phosphate</name>
        <dbReference type="ChEBI" id="CHEBI:57685"/>
    </ligand>
</feature>
<feature type="binding site" evidence="1">
    <location>
        <begin position="202"/>
        <end position="203"/>
    </location>
    <ligand>
        <name>sn-glycerol 1-phosphate</name>
        <dbReference type="ChEBI" id="CHEBI:57685"/>
    </ligand>
</feature>
<feature type="binding site" evidence="1">
    <location>
        <begin position="224"/>
        <end position="225"/>
    </location>
    <ligand>
        <name>sn-glycerol 1-phosphate</name>
        <dbReference type="ChEBI" id="CHEBI:57685"/>
    </ligand>
</feature>
<feature type="helix" evidence="4">
    <location>
        <begin position="4"/>
        <end position="13"/>
    </location>
</feature>
<feature type="strand" evidence="4">
    <location>
        <begin position="17"/>
        <end position="22"/>
    </location>
</feature>
<feature type="turn" evidence="4">
    <location>
        <begin position="24"/>
        <end position="26"/>
    </location>
</feature>
<feature type="helix" evidence="4">
    <location>
        <begin position="29"/>
        <end position="42"/>
    </location>
</feature>
<feature type="strand" evidence="4">
    <location>
        <begin position="45"/>
        <end position="49"/>
    </location>
</feature>
<feature type="helix" evidence="4">
    <location>
        <begin position="57"/>
        <end position="70"/>
    </location>
</feature>
<feature type="strand" evidence="4">
    <location>
        <begin position="75"/>
        <end position="77"/>
    </location>
</feature>
<feature type="strand" evidence="4">
    <location>
        <begin position="89"/>
        <end position="97"/>
    </location>
</feature>
<feature type="strand" evidence="4">
    <location>
        <begin position="100"/>
        <end position="102"/>
    </location>
</feature>
<feature type="helix" evidence="4">
    <location>
        <begin position="103"/>
        <end position="106"/>
    </location>
</feature>
<feature type="helix" evidence="4">
    <location>
        <begin position="108"/>
        <end position="118"/>
    </location>
</feature>
<feature type="strand" evidence="4">
    <location>
        <begin position="123"/>
        <end position="132"/>
    </location>
</feature>
<feature type="helix" evidence="4">
    <location>
        <begin position="136"/>
        <end position="141"/>
    </location>
</feature>
<feature type="helix" evidence="4">
    <location>
        <begin position="152"/>
        <end position="165"/>
    </location>
</feature>
<feature type="strand" evidence="4">
    <location>
        <begin position="168"/>
        <end position="173"/>
    </location>
</feature>
<feature type="helix" evidence="4">
    <location>
        <begin position="184"/>
        <end position="193"/>
    </location>
</feature>
<feature type="strand" evidence="4">
    <location>
        <begin position="198"/>
        <end position="203"/>
    </location>
</feature>
<feature type="helix" evidence="4">
    <location>
        <begin position="207"/>
        <end position="216"/>
    </location>
</feature>
<feature type="strand" evidence="4">
    <location>
        <begin position="219"/>
        <end position="223"/>
    </location>
</feature>
<feature type="helix" evidence="4">
    <location>
        <begin position="225"/>
        <end position="228"/>
    </location>
</feature>
<feature type="helix" evidence="4">
    <location>
        <begin position="233"/>
        <end position="245"/>
    </location>
</feature>